<accession>Q5HHG4</accession>
<name>NMO_STAAC</name>
<comment type="function">
    <text evidence="2">Nitronate monooxygenase that uses molecular oxygen to catalyze the oxidative denitrification of alkyl nitronates. Acts on propionate 3-nitronate (P3N), the presumed physiological substrate. Probably functions in the detoxification of P3N, a metabolic poison produced by plants and fungi as a defense mechanism.</text>
</comment>
<comment type="catalytic activity">
    <reaction evidence="1">
        <text>3 propionate 3-nitronate + 3 O2 + H2O = 3 3-oxopropanoate + 2 nitrate + nitrite + H2O2 + 3 H(+)</text>
        <dbReference type="Rhea" id="RHEA:57332"/>
        <dbReference type="ChEBI" id="CHEBI:15377"/>
        <dbReference type="ChEBI" id="CHEBI:15378"/>
        <dbReference type="ChEBI" id="CHEBI:15379"/>
        <dbReference type="ChEBI" id="CHEBI:16240"/>
        <dbReference type="ChEBI" id="CHEBI:16301"/>
        <dbReference type="ChEBI" id="CHEBI:17632"/>
        <dbReference type="ChEBI" id="CHEBI:33190"/>
        <dbReference type="ChEBI" id="CHEBI:136067"/>
    </reaction>
</comment>
<comment type="cofactor">
    <cofactor evidence="2">
        <name>FMN</name>
        <dbReference type="ChEBI" id="CHEBI:58210"/>
    </cofactor>
    <text evidence="2">Binds 1 FMN per subunit.</text>
</comment>
<comment type="miscellaneous">
    <text evidence="3">P3N is a potent irreversible inhibitor of the key enzyme succinate dehydrogenase in the Krebs cycle and electron transport chain. P3N has been shown to be a toxic metabolite to bacteria, plants, fungi, mammals or any organism that uses succinate dehydrogenase.</text>
</comment>
<comment type="similarity">
    <text evidence="3">Belongs to the nitronate monooxygenase family. NMO class I subfamily.</text>
</comment>
<sequence length="355" mass="38548">MWNKNRLTQMLSIEYPIIQAGMAGSTTPKLVASVSNSGGLGTIGAGYFNTQQLEDEIDYVRQLTSNSFGVNVFVPSQQSYTSSQIENMNAWLKPYRRALHLEEPVVKITEEQQFKCHIDTIIKKQVPVCCFTFGIPSEQIISRLKAANVKLIGTATSVDEAIANEKAGMDAIVAQGSEAGGHRGSFLKPKNQLPMVGTISLVPQIVDVVSIPVIAAGGIMDGRGVLASIVLGAEGVQMGTAFLTSQDSNASELLRDAIINSKETDTVITKAFSGKLARGINNRFIEEMSQYEGDIPDYPIQNELTSSIRKAAANIGDKELIHMWSGQSPRLATTHPANTIMSNIINQINQIMQYK</sequence>
<evidence type="ECO:0000250" key="1">
    <source>
        <dbReference type="UniProtKB" id="D0V3Y4"/>
    </source>
</evidence>
<evidence type="ECO:0000250" key="2">
    <source>
        <dbReference type="UniProtKB" id="Q9HWH9"/>
    </source>
</evidence>
<evidence type="ECO:0000305" key="3"/>
<organism>
    <name type="scientific">Staphylococcus aureus (strain COL)</name>
    <dbReference type="NCBI Taxonomy" id="93062"/>
    <lineage>
        <taxon>Bacteria</taxon>
        <taxon>Bacillati</taxon>
        <taxon>Bacillota</taxon>
        <taxon>Bacilli</taxon>
        <taxon>Bacillales</taxon>
        <taxon>Staphylococcaceae</taxon>
        <taxon>Staphylococcus</taxon>
    </lineage>
</organism>
<feature type="chain" id="PRO_0000360891" description="Probable nitronate monooxygenase">
    <location>
        <begin position="1"/>
        <end position="355"/>
    </location>
</feature>
<feature type="binding site" evidence="2">
    <location>
        <position position="71"/>
    </location>
    <ligand>
        <name>FMN</name>
        <dbReference type="ChEBI" id="CHEBI:58210"/>
    </ligand>
</feature>
<feature type="binding site" evidence="2">
    <location>
        <position position="175"/>
    </location>
    <ligand>
        <name>FMN</name>
        <dbReference type="ChEBI" id="CHEBI:58210"/>
    </ligand>
</feature>
<feature type="binding site" evidence="2">
    <location>
        <position position="180"/>
    </location>
    <ligand>
        <name>FMN</name>
        <dbReference type="ChEBI" id="CHEBI:58210"/>
    </ligand>
</feature>
<feature type="binding site" evidence="2">
    <location>
        <position position="218"/>
    </location>
    <ligand>
        <name>FMN</name>
        <dbReference type="ChEBI" id="CHEBI:58210"/>
    </ligand>
</feature>
<feature type="binding site" evidence="2">
    <location>
        <begin position="237"/>
        <end position="240"/>
    </location>
    <ligand>
        <name>FMN</name>
        <dbReference type="ChEBI" id="CHEBI:58210"/>
    </ligand>
</feature>
<reference key="1">
    <citation type="journal article" date="2005" name="J. Bacteriol.">
        <title>Insights on evolution of virulence and resistance from the complete genome analysis of an early methicillin-resistant Staphylococcus aureus strain and a biofilm-producing methicillin-resistant Staphylococcus epidermidis strain.</title>
        <authorList>
            <person name="Gill S.R."/>
            <person name="Fouts D.E."/>
            <person name="Archer G.L."/>
            <person name="Mongodin E.F."/>
            <person name="DeBoy R.T."/>
            <person name="Ravel J."/>
            <person name="Paulsen I.T."/>
            <person name="Kolonay J.F."/>
            <person name="Brinkac L.M."/>
            <person name="Beanan M.J."/>
            <person name="Dodson R.J."/>
            <person name="Daugherty S.C."/>
            <person name="Madupu R."/>
            <person name="Angiuoli S.V."/>
            <person name="Durkin A.S."/>
            <person name="Haft D.H."/>
            <person name="Vamathevan J.J."/>
            <person name="Khouri H."/>
            <person name="Utterback T.R."/>
            <person name="Lee C."/>
            <person name="Dimitrov G."/>
            <person name="Jiang L."/>
            <person name="Qin H."/>
            <person name="Weidman J."/>
            <person name="Tran K."/>
            <person name="Kang K.H."/>
            <person name="Hance I.R."/>
            <person name="Nelson K.E."/>
            <person name="Fraser C.M."/>
        </authorList>
    </citation>
    <scope>NUCLEOTIDE SEQUENCE [LARGE SCALE GENOMIC DNA]</scope>
    <source>
        <strain>COL</strain>
    </source>
</reference>
<protein>
    <recommendedName>
        <fullName>Probable nitronate monooxygenase</fullName>
        <shortName>NMO</shortName>
        <ecNumber evidence="2">1.13.12.-</ecNumber>
    </recommendedName>
    <alternativeName>
        <fullName>Propionate 3-nitronate monooxygenase</fullName>
        <shortName>P3N monooxygenase</shortName>
    </alternativeName>
</protein>
<gene>
    <name type="ordered locus">SACOL0922</name>
</gene>
<proteinExistence type="inferred from homology"/>
<keyword id="KW-0216">Detoxification</keyword>
<keyword id="KW-0285">Flavoprotein</keyword>
<keyword id="KW-0288">FMN</keyword>
<keyword id="KW-0503">Monooxygenase</keyword>
<keyword id="KW-0547">Nucleotide-binding</keyword>
<keyword id="KW-0560">Oxidoreductase</keyword>
<dbReference type="EC" id="1.13.12.-" evidence="2"/>
<dbReference type="EMBL" id="CP000046">
    <property type="protein sequence ID" value="AAW37892.1"/>
    <property type="molecule type" value="Genomic_DNA"/>
</dbReference>
<dbReference type="RefSeq" id="WP_000267247.1">
    <property type="nucleotide sequence ID" value="NZ_JBGOFO010000002.1"/>
</dbReference>
<dbReference type="SMR" id="Q5HHG4"/>
<dbReference type="KEGG" id="sac:SACOL0922"/>
<dbReference type="HOGENOM" id="CLU_038732_5_1_9"/>
<dbReference type="Proteomes" id="UP000000530">
    <property type="component" value="Chromosome"/>
</dbReference>
<dbReference type="GO" id="GO:0018580">
    <property type="term" value="F:nitronate monooxygenase activity"/>
    <property type="evidence" value="ECO:0007669"/>
    <property type="project" value="InterPro"/>
</dbReference>
<dbReference type="GO" id="GO:0000166">
    <property type="term" value="F:nucleotide binding"/>
    <property type="evidence" value="ECO:0007669"/>
    <property type="project" value="UniProtKB-KW"/>
</dbReference>
<dbReference type="GO" id="GO:0009636">
    <property type="term" value="P:response to toxic substance"/>
    <property type="evidence" value="ECO:0007669"/>
    <property type="project" value="UniProtKB-KW"/>
</dbReference>
<dbReference type="CDD" id="cd04730">
    <property type="entry name" value="NPD_like"/>
    <property type="match status" value="1"/>
</dbReference>
<dbReference type="FunFam" id="3.20.20.70:FF:000154">
    <property type="entry name" value="Probable nitronate monooxygenase"/>
    <property type="match status" value="1"/>
</dbReference>
<dbReference type="Gene3D" id="3.20.20.70">
    <property type="entry name" value="Aldolase class I"/>
    <property type="match status" value="1"/>
</dbReference>
<dbReference type="InterPro" id="IPR013785">
    <property type="entry name" value="Aldolase_TIM"/>
</dbReference>
<dbReference type="InterPro" id="IPR004136">
    <property type="entry name" value="NMO"/>
</dbReference>
<dbReference type="PANTHER" id="PTHR42747">
    <property type="entry name" value="NITRONATE MONOOXYGENASE-RELATED"/>
    <property type="match status" value="1"/>
</dbReference>
<dbReference type="PANTHER" id="PTHR42747:SF3">
    <property type="entry name" value="NITRONATE MONOOXYGENASE-RELATED"/>
    <property type="match status" value="1"/>
</dbReference>
<dbReference type="Pfam" id="PF03060">
    <property type="entry name" value="NMO"/>
    <property type="match status" value="1"/>
</dbReference>
<dbReference type="SUPFAM" id="SSF51412">
    <property type="entry name" value="Inosine monophosphate dehydrogenase (IMPDH)"/>
    <property type="match status" value="1"/>
</dbReference>